<organism>
    <name type="scientific">Thermoplasma volcanium (strain ATCC 51530 / DSM 4299 / JCM 9571 / NBRC 15438 / GSS1)</name>
    <dbReference type="NCBI Taxonomy" id="273116"/>
    <lineage>
        <taxon>Archaea</taxon>
        <taxon>Methanobacteriati</taxon>
        <taxon>Thermoplasmatota</taxon>
        <taxon>Thermoplasmata</taxon>
        <taxon>Thermoplasmatales</taxon>
        <taxon>Thermoplasmataceae</taxon>
        <taxon>Thermoplasma</taxon>
    </lineage>
</organism>
<comment type="function">
    <text evidence="1">Part of the phosphoribosylformylglycinamidine synthase complex involved in the purines biosynthetic pathway. Catalyzes the ATP-dependent conversion of formylglycinamide ribonucleotide (FGAR) and glutamine to yield formylglycinamidine ribonucleotide (FGAM) and glutamate. The FGAM synthase complex is composed of three subunits. PurQ produces an ammonia molecule by converting glutamine to glutamate. PurL transfers the ammonia molecule to FGAR to form FGAM in an ATP-dependent manner. PurS interacts with PurQ and PurL and is thought to assist in the transfer of the ammonia molecule from PurQ to PurL.</text>
</comment>
<comment type="catalytic activity">
    <reaction evidence="1">
        <text>N(2)-formyl-N(1)-(5-phospho-beta-D-ribosyl)glycinamide + L-glutamine + ATP + H2O = 2-formamido-N(1)-(5-O-phospho-beta-D-ribosyl)acetamidine + L-glutamate + ADP + phosphate + H(+)</text>
        <dbReference type="Rhea" id="RHEA:17129"/>
        <dbReference type="ChEBI" id="CHEBI:15377"/>
        <dbReference type="ChEBI" id="CHEBI:15378"/>
        <dbReference type="ChEBI" id="CHEBI:29985"/>
        <dbReference type="ChEBI" id="CHEBI:30616"/>
        <dbReference type="ChEBI" id="CHEBI:43474"/>
        <dbReference type="ChEBI" id="CHEBI:58359"/>
        <dbReference type="ChEBI" id="CHEBI:147286"/>
        <dbReference type="ChEBI" id="CHEBI:147287"/>
        <dbReference type="ChEBI" id="CHEBI:456216"/>
        <dbReference type="EC" id="6.3.5.3"/>
    </reaction>
</comment>
<comment type="pathway">
    <text evidence="1">Purine metabolism; IMP biosynthesis via de novo pathway; 5-amino-1-(5-phospho-D-ribosyl)imidazole from N(2)-formyl-N(1)-(5-phospho-D-ribosyl)glycinamide: step 1/2.</text>
</comment>
<comment type="subunit">
    <text evidence="1">Monomer. Part of the FGAM synthase complex composed of 1 PurL, 1 PurQ and 2 PurS subunits.</text>
</comment>
<comment type="subcellular location">
    <subcellularLocation>
        <location evidence="1">Cytoplasm</location>
    </subcellularLocation>
</comment>
<comment type="similarity">
    <text evidence="1">Belongs to the FGAMS family.</text>
</comment>
<dbReference type="EC" id="6.3.5.3" evidence="1"/>
<dbReference type="EMBL" id="BA000011">
    <property type="protein sequence ID" value="BAB59663.1"/>
    <property type="molecule type" value="Genomic_DNA"/>
</dbReference>
<dbReference type="RefSeq" id="WP_010916779.1">
    <property type="nucleotide sequence ID" value="NC_002689.2"/>
</dbReference>
<dbReference type="SMR" id="Q97BD5"/>
<dbReference type="STRING" id="273116.gene:9381305"/>
<dbReference type="PaxDb" id="273116-14324736"/>
<dbReference type="GeneID" id="1441037"/>
<dbReference type="KEGG" id="tvo:TVG0510425"/>
<dbReference type="eggNOG" id="arCOG00641">
    <property type="taxonomic scope" value="Archaea"/>
</dbReference>
<dbReference type="HOGENOM" id="CLU_003100_0_1_2"/>
<dbReference type="OrthoDB" id="8251at2157"/>
<dbReference type="PhylomeDB" id="Q97BD5"/>
<dbReference type="UniPathway" id="UPA00074">
    <property type="reaction ID" value="UER00128"/>
</dbReference>
<dbReference type="Proteomes" id="UP000001017">
    <property type="component" value="Chromosome"/>
</dbReference>
<dbReference type="GO" id="GO:0005737">
    <property type="term" value="C:cytoplasm"/>
    <property type="evidence" value="ECO:0007669"/>
    <property type="project" value="UniProtKB-SubCell"/>
</dbReference>
<dbReference type="GO" id="GO:0005524">
    <property type="term" value="F:ATP binding"/>
    <property type="evidence" value="ECO:0007669"/>
    <property type="project" value="UniProtKB-UniRule"/>
</dbReference>
<dbReference type="GO" id="GO:0000287">
    <property type="term" value="F:magnesium ion binding"/>
    <property type="evidence" value="ECO:0007669"/>
    <property type="project" value="UniProtKB-UniRule"/>
</dbReference>
<dbReference type="GO" id="GO:0004642">
    <property type="term" value="F:phosphoribosylformylglycinamidine synthase activity"/>
    <property type="evidence" value="ECO:0007669"/>
    <property type="project" value="UniProtKB-UniRule"/>
</dbReference>
<dbReference type="GO" id="GO:0006189">
    <property type="term" value="P:'de novo' IMP biosynthetic process"/>
    <property type="evidence" value="ECO:0007669"/>
    <property type="project" value="UniProtKB-UniRule"/>
</dbReference>
<dbReference type="CDD" id="cd02203">
    <property type="entry name" value="PurL_repeat1"/>
    <property type="match status" value="1"/>
</dbReference>
<dbReference type="CDD" id="cd02204">
    <property type="entry name" value="PurL_repeat2"/>
    <property type="match status" value="1"/>
</dbReference>
<dbReference type="Gene3D" id="3.90.650.10">
    <property type="entry name" value="PurM-like C-terminal domain"/>
    <property type="match status" value="2"/>
</dbReference>
<dbReference type="Gene3D" id="3.30.1330.10">
    <property type="entry name" value="PurM-like, N-terminal domain"/>
    <property type="match status" value="2"/>
</dbReference>
<dbReference type="HAMAP" id="MF_00420">
    <property type="entry name" value="PurL_2"/>
    <property type="match status" value="1"/>
</dbReference>
<dbReference type="InterPro" id="IPR010074">
    <property type="entry name" value="PRibForGlyAmidine_synth_PurL"/>
</dbReference>
<dbReference type="InterPro" id="IPR041609">
    <property type="entry name" value="PurL_linker"/>
</dbReference>
<dbReference type="InterPro" id="IPR010918">
    <property type="entry name" value="PurM-like_C_dom"/>
</dbReference>
<dbReference type="InterPro" id="IPR036676">
    <property type="entry name" value="PurM-like_C_sf"/>
</dbReference>
<dbReference type="InterPro" id="IPR016188">
    <property type="entry name" value="PurM-like_N"/>
</dbReference>
<dbReference type="InterPro" id="IPR036921">
    <property type="entry name" value="PurM-like_N_sf"/>
</dbReference>
<dbReference type="NCBIfam" id="TIGR01736">
    <property type="entry name" value="FGAM_synth_II"/>
    <property type="match status" value="1"/>
</dbReference>
<dbReference type="NCBIfam" id="NF002290">
    <property type="entry name" value="PRK01213.1"/>
    <property type="match status" value="1"/>
</dbReference>
<dbReference type="PANTHER" id="PTHR43555">
    <property type="entry name" value="PHOSPHORIBOSYLFORMYLGLYCINAMIDINE SYNTHASE SUBUNIT PURL"/>
    <property type="match status" value="1"/>
</dbReference>
<dbReference type="PANTHER" id="PTHR43555:SF1">
    <property type="entry name" value="PHOSPHORIBOSYLFORMYLGLYCINAMIDINE SYNTHASE SUBUNIT PURL"/>
    <property type="match status" value="1"/>
</dbReference>
<dbReference type="Pfam" id="PF00586">
    <property type="entry name" value="AIRS"/>
    <property type="match status" value="2"/>
</dbReference>
<dbReference type="Pfam" id="PF02769">
    <property type="entry name" value="AIRS_C"/>
    <property type="match status" value="2"/>
</dbReference>
<dbReference type="Pfam" id="PF18072">
    <property type="entry name" value="FGAR-AT_linker"/>
    <property type="match status" value="1"/>
</dbReference>
<dbReference type="PIRSF" id="PIRSF001587">
    <property type="entry name" value="FGAM_synthase_II"/>
    <property type="match status" value="1"/>
</dbReference>
<dbReference type="SUPFAM" id="SSF56042">
    <property type="entry name" value="PurM C-terminal domain-like"/>
    <property type="match status" value="2"/>
</dbReference>
<dbReference type="SUPFAM" id="SSF55326">
    <property type="entry name" value="PurM N-terminal domain-like"/>
    <property type="match status" value="2"/>
</dbReference>
<protein>
    <recommendedName>
        <fullName evidence="1">Phosphoribosylformylglycinamidine synthase subunit PurL</fullName>
        <shortName evidence="1">FGAM synthase</shortName>
        <ecNumber evidence="1">6.3.5.3</ecNumber>
    </recommendedName>
    <alternativeName>
        <fullName evidence="1">Formylglycinamide ribonucleotide amidotransferase subunit II</fullName>
        <shortName evidence="1">FGAR amidotransferase II</shortName>
        <shortName evidence="1">FGAR-AT II</shortName>
    </alternativeName>
    <alternativeName>
        <fullName evidence="1">Glutamine amidotransferase PurL</fullName>
    </alternativeName>
    <alternativeName>
        <fullName evidence="1">Phosphoribosylformylglycinamidine synthase subunit II</fullName>
    </alternativeName>
</protein>
<feature type="chain" id="PRO_0000100528" description="Phosphoribosylformylglycinamidine synthase subunit PurL">
    <location>
        <begin position="1"/>
        <end position="759"/>
    </location>
</feature>
<feature type="active site" evidence="1">
    <location>
        <position position="61"/>
    </location>
</feature>
<feature type="active site" description="Proton acceptor" evidence="1">
    <location>
        <position position="109"/>
    </location>
</feature>
<feature type="binding site" evidence="1">
    <location>
        <position position="64"/>
    </location>
    <ligand>
        <name>ATP</name>
        <dbReference type="ChEBI" id="CHEBI:30616"/>
    </ligand>
</feature>
<feature type="binding site" evidence="1">
    <location>
        <position position="105"/>
    </location>
    <ligand>
        <name>ATP</name>
        <dbReference type="ChEBI" id="CHEBI:30616"/>
    </ligand>
</feature>
<feature type="binding site" evidence="1">
    <location>
        <position position="107"/>
    </location>
    <ligand>
        <name>Mg(2+)</name>
        <dbReference type="ChEBI" id="CHEBI:18420"/>
        <label>1</label>
    </ligand>
</feature>
<feature type="binding site" evidence="1">
    <location>
        <begin position="108"/>
        <end position="111"/>
    </location>
    <ligand>
        <name>substrate</name>
    </ligand>
</feature>
<feature type="binding site" evidence="1">
    <location>
        <position position="130"/>
    </location>
    <ligand>
        <name>substrate</name>
    </ligand>
</feature>
<feature type="binding site" evidence="1">
    <location>
        <position position="131"/>
    </location>
    <ligand>
        <name>Mg(2+)</name>
        <dbReference type="ChEBI" id="CHEBI:18420"/>
        <label>2</label>
    </ligand>
</feature>
<feature type="binding site" evidence="1">
    <location>
        <position position="260"/>
    </location>
    <ligand>
        <name>substrate</name>
    </ligand>
</feature>
<feature type="binding site" evidence="1">
    <location>
        <position position="288"/>
    </location>
    <ligand>
        <name>Mg(2+)</name>
        <dbReference type="ChEBI" id="CHEBI:18420"/>
        <label>2</label>
    </ligand>
</feature>
<feature type="binding site" evidence="1">
    <location>
        <begin position="332"/>
        <end position="334"/>
    </location>
    <ligand>
        <name>substrate</name>
    </ligand>
</feature>
<feature type="binding site" evidence="1">
    <location>
        <position position="520"/>
    </location>
    <ligand>
        <name>ATP</name>
        <dbReference type="ChEBI" id="CHEBI:30616"/>
    </ligand>
</feature>
<feature type="binding site" evidence="1">
    <location>
        <position position="557"/>
    </location>
    <ligand>
        <name>ATP</name>
        <dbReference type="ChEBI" id="CHEBI:30616"/>
    </ligand>
</feature>
<feature type="binding site" evidence="1">
    <location>
        <position position="558"/>
    </location>
    <ligand>
        <name>Mg(2+)</name>
        <dbReference type="ChEBI" id="CHEBI:18420"/>
        <label>1</label>
    </ligand>
</feature>
<feature type="binding site" evidence="1">
    <location>
        <position position="560"/>
    </location>
    <ligand>
        <name>substrate</name>
    </ligand>
</feature>
<gene>
    <name evidence="1" type="primary">purL</name>
    <name type="ordered locus">TV0521</name>
    <name type="ORF">TVG0510425</name>
</gene>
<evidence type="ECO:0000255" key="1">
    <source>
        <dbReference type="HAMAP-Rule" id="MF_00420"/>
    </source>
</evidence>
<reference key="1">
    <citation type="journal article" date="2000" name="Proc. Natl. Acad. Sci. U.S.A.">
        <title>Archaeal adaptation to higher temperatures revealed by genomic sequence of Thermoplasma volcanium.</title>
        <authorList>
            <person name="Kawashima T."/>
            <person name="Amano N."/>
            <person name="Koike H."/>
            <person name="Makino S."/>
            <person name="Higuchi S."/>
            <person name="Kawashima-Ohya Y."/>
            <person name="Watanabe K."/>
            <person name="Yamazaki M."/>
            <person name="Kanehori K."/>
            <person name="Kawamoto T."/>
            <person name="Nunoshiba T."/>
            <person name="Yamamoto Y."/>
            <person name="Aramaki H."/>
            <person name="Makino K."/>
            <person name="Suzuki M."/>
        </authorList>
    </citation>
    <scope>NUCLEOTIDE SEQUENCE [LARGE SCALE GENOMIC DNA]</scope>
    <source>
        <strain>ATCC 51530 / DSM 4299 / JCM 9571 / NBRC 15438 / GSS1</strain>
    </source>
</reference>
<sequence>MIYRHIKIRDMNDDDLINMSKRHGLSLSLDEMKAVRDYFIKEGRDPIDAEIHAIAQSWSEHCSYKSSKFYLKKYLTNLKTDYTILAMEDDAGVVEFDKDYAYVLKMESHNHPSAVEPYGGAATGIGGIVRDVVCMGAQPIALVDSLFMGDVASQKYDALLSPRYIFQGVVGGIRDYGNRIGVPNVAGSVYFDQSYNSNPLVNAGCIGIVRKDRIVRSKSYKAGDKLLLVGGKTGRDGIHGVNFASATLTRISKSSRNAIQLGNPIVEHPMMRAVLEANELGIIKAMKDLGGGGLSSAATEMVFAGGFGAEISLDDIKLKDTDMSGWEIWISESQERMLVEVLPEDVEKMKEIAEKWSLDFSILGTVVEGKKITVRYKNKKIIDMDIEFLDKAPVYQRPFERKNIEKKVSIPSEPEDLNDFALNFVSRLNNSARFNVVRQYDHTVRGSTIVGPFSGRPNLETHSDATVIKPLEDSMRGLLITSGSRPNFVSIDPYNGTLETLSEAVRNIVSTGGKPNSVVDALNFGNPERQDIMGQFVESVRAIGDFCRKFSLPVVAGNVSFYNEFRNKDIMPTPTIMMVGIIDDVTKARTTYFKKNKSQIYLVGTPCDNLSGSEYARMNNIFDGFLPAPNLSELQLEIEKIGKFSPYILSAHDVSDGGLFMALAEMSFGSGIGFNIDLGNVSASRSSVKLFSECGNQIVLEIDPIHEEEFTAEFKDLKIVRIGETGGDRIIIDEYGMNLVDLPVQDLRERWEHGLDAYI</sequence>
<proteinExistence type="inferred from homology"/>
<accession>Q97BD5</accession>
<name>PURL_THEVO</name>
<keyword id="KW-0067">ATP-binding</keyword>
<keyword id="KW-0963">Cytoplasm</keyword>
<keyword id="KW-0436">Ligase</keyword>
<keyword id="KW-0460">Magnesium</keyword>
<keyword id="KW-0479">Metal-binding</keyword>
<keyword id="KW-0547">Nucleotide-binding</keyword>
<keyword id="KW-0658">Purine biosynthesis</keyword>